<proteinExistence type="evidence at transcript level"/>
<evidence type="ECO:0000250" key="1">
    <source>
        <dbReference type="UniProtKB" id="O48814"/>
    </source>
</evidence>
<evidence type="ECO:0000255" key="2">
    <source>
        <dbReference type="PROSITE-ProRule" id="PRU00159"/>
    </source>
</evidence>
<evidence type="ECO:0000269" key="3">
    <source>
    </source>
</evidence>
<evidence type="ECO:0000303" key="4">
    <source>
    </source>
</evidence>
<evidence type="ECO:0000305" key="5"/>
<evidence type="ECO:0000312" key="6">
    <source>
        <dbReference type="Araport" id="AT1G67470"/>
    </source>
</evidence>
<evidence type="ECO:0000312" key="7">
    <source>
        <dbReference type="EMBL" id="AAC18787.1"/>
    </source>
</evidence>
<evidence type="ECO:0000312" key="8">
    <source>
        <dbReference type="EMBL" id="AAG52308.1"/>
    </source>
</evidence>
<protein>
    <recommendedName>
        <fullName evidence="4">Inactive serine/threonine-protein kinase ZRK12</fullName>
    </recommendedName>
</protein>
<sequence>MGWWRKKKKPKSEIASERGAKLLKDLIECCDGKSNPIKFFSADEIRKATNNFGVSNLVSELSHDFDYKWYSGKNENHDMILVRKAFSQSVYYKDTFFRDIAVSSMVSGHKNFLKLIGYCLEFEEPVMVYHGVKKHYHLESSEQPWKRRMKIAEDIATALAYLHTAFPRPFVYRCLSLTNILLDEDGVAKLMDFSFCVSIPEGETFVQVDYIAGTVDYLKPNYLKHGVVSEETDVFAVGHSMQMLLMGEKIFDRIMRRPFPTSKFMEEPKMDEIADPEMGEISEEELCQMKAFLLLSLRCTGHVGEVPTMVEVAKELKSIQRCLHNDTFSPSVETQFDSHQDISSSVILSNQTKDTRALLRCIACHVFDEMFQWVMMNWFRFFRRNRRIC</sequence>
<name>ZRK12_ARATH</name>
<dbReference type="EMBL" id="AC004393">
    <property type="protein sequence ID" value="AAC18787.1"/>
    <property type="molecule type" value="Genomic_DNA"/>
</dbReference>
<dbReference type="EMBL" id="AC011020">
    <property type="protein sequence ID" value="AAG52308.1"/>
    <property type="molecule type" value="Genomic_DNA"/>
</dbReference>
<dbReference type="EMBL" id="CP002684">
    <property type="protein sequence ID" value="AEE34650.1"/>
    <property type="molecule type" value="Genomic_DNA"/>
</dbReference>
<dbReference type="EMBL" id="AK118940">
    <property type="protein sequence ID" value="BAC43521.1"/>
    <property type="molecule type" value="mRNA"/>
</dbReference>
<dbReference type="PIR" id="T02158">
    <property type="entry name" value="T02158"/>
</dbReference>
<dbReference type="RefSeq" id="NP_564898.1">
    <property type="nucleotide sequence ID" value="NM_105414.4"/>
</dbReference>
<dbReference type="SMR" id="O64798"/>
<dbReference type="BioGRID" id="28289">
    <property type="interactions" value="1"/>
</dbReference>
<dbReference type="FunCoup" id="O64798">
    <property type="interactions" value="20"/>
</dbReference>
<dbReference type="IntAct" id="O64798">
    <property type="interactions" value="1"/>
</dbReference>
<dbReference type="iPTMnet" id="O64798"/>
<dbReference type="PaxDb" id="3702-AT1G67470.1"/>
<dbReference type="ProteomicsDB" id="243059"/>
<dbReference type="EnsemblPlants" id="AT1G67470.1">
    <property type="protein sequence ID" value="AT1G67470.1"/>
    <property type="gene ID" value="AT1G67470"/>
</dbReference>
<dbReference type="GeneID" id="843068"/>
<dbReference type="Gramene" id="AT1G67470.1">
    <property type="protein sequence ID" value="AT1G67470.1"/>
    <property type="gene ID" value="AT1G67470"/>
</dbReference>
<dbReference type="KEGG" id="ath:AT1G67470"/>
<dbReference type="Araport" id="AT1G67470"/>
<dbReference type="TAIR" id="AT1G67470">
    <property type="gene designation" value="ZRK12"/>
</dbReference>
<dbReference type="eggNOG" id="KOG1187">
    <property type="taxonomic scope" value="Eukaryota"/>
</dbReference>
<dbReference type="HOGENOM" id="CLU_000288_21_4_1"/>
<dbReference type="InParanoid" id="O64798"/>
<dbReference type="OMA" id="LRCIACH"/>
<dbReference type="PhylomeDB" id="O64798"/>
<dbReference type="PRO" id="PR:O64798"/>
<dbReference type="Proteomes" id="UP000006548">
    <property type="component" value="Chromosome 1"/>
</dbReference>
<dbReference type="ExpressionAtlas" id="O64798">
    <property type="expression patterns" value="baseline and differential"/>
</dbReference>
<dbReference type="GO" id="GO:0005524">
    <property type="term" value="F:ATP binding"/>
    <property type="evidence" value="ECO:0007669"/>
    <property type="project" value="UniProtKB-KW"/>
</dbReference>
<dbReference type="GO" id="GO:0004672">
    <property type="term" value="F:protein kinase activity"/>
    <property type="evidence" value="ECO:0007669"/>
    <property type="project" value="InterPro"/>
</dbReference>
<dbReference type="GO" id="GO:0007166">
    <property type="term" value="P:cell surface receptor signaling pathway"/>
    <property type="evidence" value="ECO:0007669"/>
    <property type="project" value="InterPro"/>
</dbReference>
<dbReference type="GO" id="GO:0006952">
    <property type="term" value="P:defense response"/>
    <property type="evidence" value="ECO:0007669"/>
    <property type="project" value="UniProtKB-KW"/>
</dbReference>
<dbReference type="GO" id="GO:0050776">
    <property type="term" value="P:regulation of immune response"/>
    <property type="evidence" value="ECO:0000315"/>
    <property type="project" value="UniProtKB"/>
</dbReference>
<dbReference type="GO" id="GO:0009266">
    <property type="term" value="P:response to temperature stimulus"/>
    <property type="evidence" value="ECO:0000270"/>
    <property type="project" value="UniProtKB"/>
</dbReference>
<dbReference type="FunFam" id="3.30.200.20:FF:000515">
    <property type="entry name" value="Inactive serine/threonine-protein kinase"/>
    <property type="match status" value="1"/>
</dbReference>
<dbReference type="Gene3D" id="3.30.200.20">
    <property type="entry name" value="Phosphorylase Kinase, domain 1"/>
    <property type="match status" value="1"/>
</dbReference>
<dbReference type="Gene3D" id="1.10.510.10">
    <property type="entry name" value="Transferase(Phosphotransferase) domain 1"/>
    <property type="match status" value="1"/>
</dbReference>
<dbReference type="InterPro" id="IPR011009">
    <property type="entry name" value="Kinase-like_dom_sf"/>
</dbReference>
<dbReference type="InterPro" id="IPR000719">
    <property type="entry name" value="Prot_kinase_dom"/>
</dbReference>
<dbReference type="InterPro" id="IPR045274">
    <property type="entry name" value="WAK-like"/>
</dbReference>
<dbReference type="PANTHER" id="PTHR27005:SF188">
    <property type="entry name" value="INACTIVE SERINE_THREONINE-PROTEIN KINASE ZRK12-RELATED"/>
    <property type="match status" value="1"/>
</dbReference>
<dbReference type="PANTHER" id="PTHR27005">
    <property type="entry name" value="WALL-ASSOCIATED RECEPTOR KINASE-LIKE 21"/>
    <property type="match status" value="1"/>
</dbReference>
<dbReference type="Pfam" id="PF00069">
    <property type="entry name" value="Pkinase"/>
    <property type="match status" value="1"/>
</dbReference>
<dbReference type="SMART" id="SM00220">
    <property type="entry name" value="S_TKc"/>
    <property type="match status" value="1"/>
</dbReference>
<dbReference type="SUPFAM" id="SSF56112">
    <property type="entry name" value="Protein kinase-like (PK-like)"/>
    <property type="match status" value="1"/>
</dbReference>
<dbReference type="PROSITE" id="PS50011">
    <property type="entry name" value="PROTEIN_KINASE_DOM"/>
    <property type="match status" value="1"/>
</dbReference>
<gene>
    <name evidence="4" type="primary">ZRK12</name>
    <name evidence="6" type="ordered locus">At1g67470</name>
    <name evidence="8" type="ORF">F12B7.2</name>
    <name evidence="7" type="ORF">T1F15.6</name>
</gene>
<reference key="1">
    <citation type="journal article" date="2000" name="Nature">
        <title>Sequence and analysis of chromosome 1 of the plant Arabidopsis thaliana.</title>
        <authorList>
            <person name="Theologis A."/>
            <person name="Ecker J.R."/>
            <person name="Palm C.J."/>
            <person name="Federspiel N.A."/>
            <person name="Kaul S."/>
            <person name="White O."/>
            <person name="Alonso J."/>
            <person name="Altafi H."/>
            <person name="Araujo R."/>
            <person name="Bowman C.L."/>
            <person name="Brooks S.Y."/>
            <person name="Buehler E."/>
            <person name="Chan A."/>
            <person name="Chao Q."/>
            <person name="Chen H."/>
            <person name="Cheuk R.F."/>
            <person name="Chin C.W."/>
            <person name="Chung M.K."/>
            <person name="Conn L."/>
            <person name="Conway A.B."/>
            <person name="Conway A.R."/>
            <person name="Creasy T.H."/>
            <person name="Dewar K."/>
            <person name="Dunn P."/>
            <person name="Etgu P."/>
            <person name="Feldblyum T.V."/>
            <person name="Feng J.-D."/>
            <person name="Fong B."/>
            <person name="Fujii C.Y."/>
            <person name="Gill J.E."/>
            <person name="Goldsmith A.D."/>
            <person name="Haas B."/>
            <person name="Hansen N.F."/>
            <person name="Hughes B."/>
            <person name="Huizar L."/>
            <person name="Hunter J.L."/>
            <person name="Jenkins J."/>
            <person name="Johnson-Hopson C."/>
            <person name="Khan S."/>
            <person name="Khaykin E."/>
            <person name="Kim C.J."/>
            <person name="Koo H.L."/>
            <person name="Kremenetskaia I."/>
            <person name="Kurtz D.B."/>
            <person name="Kwan A."/>
            <person name="Lam B."/>
            <person name="Langin-Hooper S."/>
            <person name="Lee A."/>
            <person name="Lee J.M."/>
            <person name="Lenz C.A."/>
            <person name="Li J.H."/>
            <person name="Li Y.-P."/>
            <person name="Lin X."/>
            <person name="Liu S.X."/>
            <person name="Liu Z.A."/>
            <person name="Luros J.S."/>
            <person name="Maiti R."/>
            <person name="Marziali A."/>
            <person name="Militscher J."/>
            <person name="Miranda M."/>
            <person name="Nguyen M."/>
            <person name="Nierman W.C."/>
            <person name="Osborne B.I."/>
            <person name="Pai G."/>
            <person name="Peterson J."/>
            <person name="Pham P.K."/>
            <person name="Rizzo M."/>
            <person name="Rooney T."/>
            <person name="Rowley D."/>
            <person name="Sakano H."/>
            <person name="Salzberg S.L."/>
            <person name="Schwartz J.R."/>
            <person name="Shinn P."/>
            <person name="Southwick A.M."/>
            <person name="Sun H."/>
            <person name="Tallon L.J."/>
            <person name="Tambunga G."/>
            <person name="Toriumi M.J."/>
            <person name="Town C.D."/>
            <person name="Utterback T."/>
            <person name="Van Aken S."/>
            <person name="Vaysberg M."/>
            <person name="Vysotskaia V.S."/>
            <person name="Walker M."/>
            <person name="Wu D."/>
            <person name="Yu G."/>
            <person name="Fraser C.M."/>
            <person name="Venter J.C."/>
            <person name="Davis R.W."/>
        </authorList>
    </citation>
    <scope>NUCLEOTIDE SEQUENCE [LARGE SCALE GENOMIC DNA]</scope>
    <source>
        <strain>cv. Columbia</strain>
    </source>
</reference>
<reference key="2">
    <citation type="journal article" date="2017" name="Plant J.">
        <title>Araport11: a complete reannotation of the Arabidopsis thaliana reference genome.</title>
        <authorList>
            <person name="Cheng C.Y."/>
            <person name="Krishnakumar V."/>
            <person name="Chan A.P."/>
            <person name="Thibaud-Nissen F."/>
            <person name="Schobel S."/>
            <person name="Town C.D."/>
        </authorList>
    </citation>
    <scope>GENOME REANNOTATION</scope>
    <source>
        <strain>cv. Columbia</strain>
    </source>
</reference>
<reference key="3">
    <citation type="journal article" date="2002" name="Science">
        <title>Functional annotation of a full-length Arabidopsis cDNA collection.</title>
        <authorList>
            <person name="Seki M."/>
            <person name="Narusaka M."/>
            <person name="Kamiya A."/>
            <person name="Ishida J."/>
            <person name="Satou M."/>
            <person name="Sakurai T."/>
            <person name="Nakajima M."/>
            <person name="Enju A."/>
            <person name="Akiyama K."/>
            <person name="Oono Y."/>
            <person name="Muramatsu M."/>
            <person name="Hayashizaki Y."/>
            <person name="Kawai J."/>
            <person name="Carninci P."/>
            <person name="Itoh M."/>
            <person name="Ishii Y."/>
            <person name="Arakawa T."/>
            <person name="Shibata K."/>
            <person name="Shinagawa A."/>
            <person name="Shinozaki K."/>
        </authorList>
    </citation>
    <scope>NUCLEOTIDE SEQUENCE [LARGE SCALE MRNA]</scope>
    <source>
        <strain>cv. Columbia</strain>
    </source>
</reference>
<reference key="4">
    <citation type="journal article" date="2017" name="New Phytol.">
        <title>Arabidopsis ZED1-related kinases mediate the temperature-sensitive intersection of immune response and growth homeostasis.</title>
        <authorList>
            <person name="Wang Z."/>
            <person name="Cui D."/>
            <person name="Liu J."/>
            <person name="Zhao J."/>
            <person name="Liu C."/>
            <person name="Xin W."/>
            <person name="Li Y."/>
            <person name="Liu N."/>
            <person name="Ren D."/>
            <person name="Tang D."/>
            <person name="Hu Y."/>
        </authorList>
    </citation>
    <scope>FUNCTION</scope>
    <scope>DISRUPTION PHENOTYPE</scope>
    <scope>INDUCTION BY ELEVATED TEMPERATURE</scope>
    <source>
        <strain>cv. Columbia</strain>
        <strain>cv. Landsberg erecta</strain>
    </source>
</reference>
<accession>O64798</accession>
<accession>Q8GWC4</accession>
<comment type="function">
    <text evidence="3">Together with RPP13L4/ZAR1, involved in the regulation of the ambient temperature-sensitive intersection of growth and immune response in the absence of pathogens.</text>
</comment>
<comment type="induction">
    <text evidence="3">Induced by elevated temperature (e.g. at 25 degrees Celsius).</text>
</comment>
<comment type="domain">
    <text>The protein kinase domain is predicted to be catalytically inactive.</text>
</comment>
<comment type="disruption phenotype">
    <text evidence="3">Slightly shortened inflorescence stem when grown at 25 degrees Celsius (PubMed:28499073). The double mutant zed1-6 zrk12-1 exhibits short inflorescence stem and autoimmunity symptoms when grown at 25 degrees Celsius (PubMed:28499073).</text>
</comment>
<comment type="similarity">
    <text evidence="2">Belongs to the protein kinase superfamily. Ser/Thr protein kinase family.</text>
</comment>
<keyword id="KW-0067">ATP-binding</keyword>
<keyword id="KW-0547">Nucleotide-binding</keyword>
<keyword id="KW-0597">Phosphoprotein</keyword>
<keyword id="KW-0611">Plant defense</keyword>
<keyword id="KW-0675">Receptor</keyword>
<keyword id="KW-1185">Reference proteome</keyword>
<feature type="chain" id="PRO_0000403341" description="Inactive serine/threonine-protein kinase ZRK12">
    <location>
        <begin position="1"/>
        <end position="389"/>
    </location>
</feature>
<feature type="domain" description="Protein kinase" evidence="2">
    <location>
        <begin position="41"/>
        <end position="342"/>
    </location>
</feature>
<feature type="binding site" evidence="2">
    <location>
        <begin position="47"/>
        <end position="55"/>
    </location>
    <ligand>
        <name>ATP</name>
        <dbReference type="ChEBI" id="CHEBI:30616"/>
    </ligand>
</feature>
<feature type="binding site" evidence="2">
    <location>
        <position position="84"/>
    </location>
    <ligand>
        <name>ATP</name>
        <dbReference type="ChEBI" id="CHEBI:30616"/>
    </ligand>
</feature>
<feature type="modified residue" description="Phosphotyrosine" evidence="1">
    <location>
        <position position="129"/>
    </location>
</feature>
<feature type="modified residue" description="Phosphothreonine" evidence="1">
    <location>
        <position position="214"/>
    </location>
</feature>
<feature type="modified residue" description="Phosphotyrosine" evidence="1">
    <location>
        <position position="222"/>
    </location>
</feature>
<feature type="sequence conflict" description="In Ref. 3; BAC43521." evidence="5" ref="3">
    <original>E</original>
    <variation>G</variation>
    <location>
        <position position="142"/>
    </location>
</feature>
<feature type="sequence conflict" description="In Ref. 3; BAC43521." evidence="5" ref="3">
    <original>I</original>
    <variation>T</variation>
    <location>
        <position position="211"/>
    </location>
</feature>
<organism>
    <name type="scientific">Arabidopsis thaliana</name>
    <name type="common">Mouse-ear cress</name>
    <dbReference type="NCBI Taxonomy" id="3702"/>
    <lineage>
        <taxon>Eukaryota</taxon>
        <taxon>Viridiplantae</taxon>
        <taxon>Streptophyta</taxon>
        <taxon>Embryophyta</taxon>
        <taxon>Tracheophyta</taxon>
        <taxon>Spermatophyta</taxon>
        <taxon>Magnoliopsida</taxon>
        <taxon>eudicotyledons</taxon>
        <taxon>Gunneridae</taxon>
        <taxon>Pentapetalae</taxon>
        <taxon>rosids</taxon>
        <taxon>malvids</taxon>
        <taxon>Brassicales</taxon>
        <taxon>Brassicaceae</taxon>
        <taxon>Camelineae</taxon>
        <taxon>Arabidopsis</taxon>
    </lineage>
</organism>